<keyword id="KW-0175">Coiled coil</keyword>
<keyword id="KW-0472">Membrane</keyword>
<keyword id="KW-1185">Reference proteome</keyword>
<keyword id="KW-0732">Signal</keyword>
<keyword id="KW-0812">Transmembrane</keyword>
<keyword id="KW-1133">Transmembrane helix</keyword>
<dbReference type="EMBL" id="AB024032">
    <property type="protein sequence ID" value="BAA97015.1"/>
    <property type="status" value="ALT_SEQ"/>
    <property type="molecule type" value="Genomic_DNA"/>
</dbReference>
<dbReference type="EMBL" id="CP002688">
    <property type="protein sequence ID" value="AED95875.1"/>
    <property type="molecule type" value="Genomic_DNA"/>
</dbReference>
<dbReference type="EMBL" id="AY034971">
    <property type="protein sequence ID" value="AAK59476.1"/>
    <property type="molecule type" value="mRNA"/>
</dbReference>
<dbReference type="EMBL" id="BT000986">
    <property type="protein sequence ID" value="AAN41386.1"/>
    <property type="molecule type" value="mRNA"/>
</dbReference>
<dbReference type="RefSeq" id="NP_568716.1">
    <property type="nucleotide sequence ID" value="NM_124373.3"/>
</dbReference>
<dbReference type="SMR" id="Q94CC0"/>
<dbReference type="FunCoup" id="Q94CC0">
    <property type="interactions" value="3845"/>
</dbReference>
<dbReference type="STRING" id="3702.Q94CC0"/>
<dbReference type="iPTMnet" id="Q94CC0"/>
<dbReference type="PaxDb" id="3702-AT5G49945.1"/>
<dbReference type="ProteomicsDB" id="243169"/>
<dbReference type="EnsemblPlants" id="AT5G49945.1">
    <property type="protein sequence ID" value="AT5G49945.1"/>
    <property type="gene ID" value="AT5G49945"/>
</dbReference>
<dbReference type="GeneID" id="835058"/>
<dbReference type="Gramene" id="AT5G49945.1">
    <property type="protein sequence ID" value="AT5G49945.1"/>
    <property type="gene ID" value="AT5G49945"/>
</dbReference>
<dbReference type="KEGG" id="ath:AT5G49945"/>
<dbReference type="Araport" id="AT5G49945"/>
<dbReference type="TAIR" id="AT5G49945"/>
<dbReference type="eggNOG" id="KOG2357">
    <property type="taxonomic scope" value="Eukaryota"/>
</dbReference>
<dbReference type="HOGENOM" id="CLU_024226_1_0_1"/>
<dbReference type="InParanoid" id="Q94CC0"/>
<dbReference type="OMA" id="HAHCANE"/>
<dbReference type="PhylomeDB" id="Q94CC0"/>
<dbReference type="PRO" id="PR:Q94CC0"/>
<dbReference type="Proteomes" id="UP000006548">
    <property type="component" value="Chromosome 5"/>
</dbReference>
<dbReference type="ExpressionAtlas" id="Q94CC0">
    <property type="expression patterns" value="baseline and differential"/>
</dbReference>
<dbReference type="GO" id="GO:0005783">
    <property type="term" value="C:endoplasmic reticulum"/>
    <property type="evidence" value="ECO:0007005"/>
    <property type="project" value="TAIR"/>
</dbReference>
<dbReference type="GO" id="GO:0016020">
    <property type="term" value="C:membrane"/>
    <property type="evidence" value="ECO:0007669"/>
    <property type="project" value="UniProtKB-SubCell"/>
</dbReference>
<dbReference type="GO" id="GO:0005509">
    <property type="term" value="F:calcium ion binding"/>
    <property type="evidence" value="ECO:0007669"/>
    <property type="project" value="InterPro"/>
</dbReference>
<dbReference type="GO" id="GO:0032469">
    <property type="term" value="P:endoplasmic reticulum calcium ion homeostasis"/>
    <property type="evidence" value="ECO:0007669"/>
    <property type="project" value="InterPro"/>
</dbReference>
<dbReference type="InterPro" id="IPR012879">
    <property type="entry name" value="CCDC47"/>
</dbReference>
<dbReference type="PANTHER" id="PTHR12883">
    <property type="entry name" value="ADIPOCYTE-SPECIFIC PROTEIN 4-RELATED"/>
    <property type="match status" value="1"/>
</dbReference>
<dbReference type="PANTHER" id="PTHR12883:SF0">
    <property type="entry name" value="PAT COMPLEX SUBUNIT CCDC47"/>
    <property type="match status" value="1"/>
</dbReference>
<dbReference type="Pfam" id="PF07946">
    <property type="entry name" value="CCDC47"/>
    <property type="match status" value="1"/>
</dbReference>
<accession>Q94CC0</accession>
<accession>Q9LTX6</accession>
<sequence length="480" mass="54592">MSRYFSFFFLALFLHYRIIVASPFEGFDAEEDDVTDDSSHLLHHSLPPPLLTQSHSSLSDPDPEPEPSSAECKSDLITESDLEHQSDSKTPSSTPFEYWDEDEFEGLPVEIETLESPLITENGTHADPKTPDLKTSSEAQGDTNDQTKKKKSYAVEIACVCFLIALAINYFVGKRENESLALAWAAKFASKDTIFQKNFSMLGVSELEDSPLLLKEALNVFKFYASGRRYCHGLLATMELKSRHDLISRVFNLVVPCKDEITFEVYMNEETMDHVVFAMTKKKAAKTMQKEMRDLQRFAGIVSPPAGRKWVSEEFALISESKEVAADLITDTVLDQVFGDKAVDKYGKNFMSMHISDQHPGKHKKMMLFKFSLPDAKHMDDIVRLVALIPYYIDLVGRYRLSSQARNKTESGRQKAAEEAYKELHNARQEALQKKKAEKKKMMEEAEAKMSAEVIRKKEAKERARQVKKAVPKMKMSRSH</sequence>
<name>Y5994_ARATH</name>
<evidence type="ECO:0000255" key="1"/>
<evidence type="ECO:0000256" key="2">
    <source>
        <dbReference type="SAM" id="MobiDB-lite"/>
    </source>
</evidence>
<evidence type="ECO:0000305" key="3"/>
<proteinExistence type="evidence at transcript level"/>
<protein>
    <recommendedName>
        <fullName>Uncharacterized protein At5g49945</fullName>
    </recommendedName>
</protein>
<comment type="subcellular location">
    <subcellularLocation>
        <location evidence="1">Membrane</location>
        <topology evidence="1">Single-pass membrane protein</topology>
    </subcellularLocation>
</comment>
<comment type="sequence caution" evidence="3">
    <conflict type="erroneous gene model prediction">
        <sequence resource="EMBL-CDS" id="BAA97015"/>
    </conflict>
    <text>The predicted gene At5g49940 has been split into 2 genes: At5g49940 and At5g49945.</text>
</comment>
<feature type="signal peptide" evidence="1">
    <location>
        <begin position="1"/>
        <end position="21"/>
    </location>
</feature>
<feature type="chain" id="PRO_0000247611" description="Uncharacterized protein At5g49945">
    <location>
        <begin position="22"/>
        <end position="480"/>
    </location>
</feature>
<feature type="transmembrane region" description="Helical" evidence="1">
    <location>
        <begin position="153"/>
        <end position="173"/>
    </location>
</feature>
<feature type="region of interest" description="Disordered" evidence="2">
    <location>
        <begin position="38"/>
        <end position="72"/>
    </location>
</feature>
<feature type="region of interest" description="Disordered" evidence="2">
    <location>
        <begin position="116"/>
        <end position="147"/>
    </location>
</feature>
<feature type="region of interest" description="Disordered" evidence="2">
    <location>
        <begin position="404"/>
        <end position="480"/>
    </location>
</feature>
<feature type="coiled-coil region" evidence="1">
    <location>
        <begin position="411"/>
        <end position="467"/>
    </location>
</feature>
<feature type="compositionally biased region" description="Low complexity" evidence="2">
    <location>
        <begin position="51"/>
        <end position="60"/>
    </location>
</feature>
<feature type="compositionally biased region" description="Polar residues" evidence="2">
    <location>
        <begin position="133"/>
        <end position="144"/>
    </location>
</feature>
<feature type="compositionally biased region" description="Basic and acidic residues" evidence="2">
    <location>
        <begin position="407"/>
        <end position="465"/>
    </location>
</feature>
<feature type="compositionally biased region" description="Basic residues" evidence="2">
    <location>
        <begin position="466"/>
        <end position="480"/>
    </location>
</feature>
<reference key="1">
    <citation type="journal article" date="2000" name="DNA Res.">
        <title>Structural analysis of Arabidopsis thaliana chromosome 5. X. Sequence features of the regions of 3,076,755 bp covered by sixty P1 and TAC clones.</title>
        <authorList>
            <person name="Sato S."/>
            <person name="Nakamura Y."/>
            <person name="Kaneko T."/>
            <person name="Katoh T."/>
            <person name="Asamizu E."/>
            <person name="Kotani H."/>
            <person name="Tabata S."/>
        </authorList>
    </citation>
    <scope>NUCLEOTIDE SEQUENCE [LARGE SCALE GENOMIC DNA]</scope>
    <source>
        <strain>cv. Columbia</strain>
    </source>
</reference>
<reference key="2">
    <citation type="journal article" date="2017" name="Plant J.">
        <title>Araport11: a complete reannotation of the Arabidopsis thaliana reference genome.</title>
        <authorList>
            <person name="Cheng C.Y."/>
            <person name="Krishnakumar V."/>
            <person name="Chan A.P."/>
            <person name="Thibaud-Nissen F."/>
            <person name="Schobel S."/>
            <person name="Town C.D."/>
        </authorList>
    </citation>
    <scope>GENOME REANNOTATION</scope>
    <source>
        <strain>cv. Columbia</strain>
    </source>
</reference>
<reference key="3">
    <citation type="journal article" date="2003" name="Science">
        <title>Empirical analysis of transcriptional activity in the Arabidopsis genome.</title>
        <authorList>
            <person name="Yamada K."/>
            <person name="Lim J."/>
            <person name="Dale J.M."/>
            <person name="Chen H."/>
            <person name="Shinn P."/>
            <person name="Palm C.J."/>
            <person name="Southwick A.M."/>
            <person name="Wu H.C."/>
            <person name="Kim C.J."/>
            <person name="Nguyen M."/>
            <person name="Pham P.K."/>
            <person name="Cheuk R.F."/>
            <person name="Karlin-Newmann G."/>
            <person name="Liu S.X."/>
            <person name="Lam B."/>
            <person name="Sakano H."/>
            <person name="Wu T."/>
            <person name="Yu G."/>
            <person name="Miranda M."/>
            <person name="Quach H.L."/>
            <person name="Tripp M."/>
            <person name="Chang C.H."/>
            <person name="Lee J.M."/>
            <person name="Toriumi M.J."/>
            <person name="Chan M.M."/>
            <person name="Tang C.C."/>
            <person name="Onodera C.S."/>
            <person name="Deng J.M."/>
            <person name="Akiyama K."/>
            <person name="Ansari Y."/>
            <person name="Arakawa T."/>
            <person name="Banh J."/>
            <person name="Banno F."/>
            <person name="Bowser L."/>
            <person name="Brooks S.Y."/>
            <person name="Carninci P."/>
            <person name="Chao Q."/>
            <person name="Choy N."/>
            <person name="Enju A."/>
            <person name="Goldsmith A.D."/>
            <person name="Gurjal M."/>
            <person name="Hansen N.F."/>
            <person name="Hayashizaki Y."/>
            <person name="Johnson-Hopson C."/>
            <person name="Hsuan V.W."/>
            <person name="Iida K."/>
            <person name="Karnes M."/>
            <person name="Khan S."/>
            <person name="Koesema E."/>
            <person name="Ishida J."/>
            <person name="Jiang P.X."/>
            <person name="Jones T."/>
            <person name="Kawai J."/>
            <person name="Kamiya A."/>
            <person name="Meyers C."/>
            <person name="Nakajima M."/>
            <person name="Narusaka M."/>
            <person name="Seki M."/>
            <person name="Sakurai T."/>
            <person name="Satou M."/>
            <person name="Tamse R."/>
            <person name="Vaysberg M."/>
            <person name="Wallender E.K."/>
            <person name="Wong C."/>
            <person name="Yamamura Y."/>
            <person name="Yuan S."/>
            <person name="Shinozaki K."/>
            <person name="Davis R.W."/>
            <person name="Theologis A."/>
            <person name="Ecker J.R."/>
        </authorList>
    </citation>
    <scope>NUCLEOTIDE SEQUENCE [LARGE SCALE MRNA]</scope>
    <source>
        <strain>cv. Columbia</strain>
    </source>
</reference>
<gene>
    <name type="ordered locus">At5g49945</name>
    <name type="ORF">K9P8</name>
</gene>
<organism>
    <name type="scientific">Arabidopsis thaliana</name>
    <name type="common">Mouse-ear cress</name>
    <dbReference type="NCBI Taxonomy" id="3702"/>
    <lineage>
        <taxon>Eukaryota</taxon>
        <taxon>Viridiplantae</taxon>
        <taxon>Streptophyta</taxon>
        <taxon>Embryophyta</taxon>
        <taxon>Tracheophyta</taxon>
        <taxon>Spermatophyta</taxon>
        <taxon>Magnoliopsida</taxon>
        <taxon>eudicotyledons</taxon>
        <taxon>Gunneridae</taxon>
        <taxon>Pentapetalae</taxon>
        <taxon>rosids</taxon>
        <taxon>malvids</taxon>
        <taxon>Brassicales</taxon>
        <taxon>Brassicaceae</taxon>
        <taxon>Camelineae</taxon>
        <taxon>Arabidopsis</taxon>
    </lineage>
</organism>